<feature type="chain" id="PRO_1000080959" description="Nucleoside diphosphate kinase">
    <location>
        <begin position="1"/>
        <end position="144"/>
    </location>
</feature>
<feature type="active site" description="Pros-phosphohistidine intermediate" evidence="1">
    <location>
        <position position="117"/>
    </location>
</feature>
<feature type="binding site" evidence="1">
    <location>
        <position position="11"/>
    </location>
    <ligand>
        <name>ATP</name>
        <dbReference type="ChEBI" id="CHEBI:30616"/>
    </ligand>
</feature>
<feature type="binding site" evidence="1">
    <location>
        <position position="59"/>
    </location>
    <ligand>
        <name>ATP</name>
        <dbReference type="ChEBI" id="CHEBI:30616"/>
    </ligand>
</feature>
<feature type="binding site" evidence="1">
    <location>
        <position position="87"/>
    </location>
    <ligand>
        <name>ATP</name>
        <dbReference type="ChEBI" id="CHEBI:30616"/>
    </ligand>
</feature>
<feature type="binding site" evidence="1">
    <location>
        <position position="93"/>
    </location>
    <ligand>
        <name>ATP</name>
        <dbReference type="ChEBI" id="CHEBI:30616"/>
    </ligand>
</feature>
<feature type="binding site" evidence="1">
    <location>
        <position position="104"/>
    </location>
    <ligand>
        <name>ATP</name>
        <dbReference type="ChEBI" id="CHEBI:30616"/>
    </ligand>
</feature>
<feature type="binding site" evidence="1">
    <location>
        <position position="114"/>
    </location>
    <ligand>
        <name>ATP</name>
        <dbReference type="ChEBI" id="CHEBI:30616"/>
    </ligand>
</feature>
<accession>A9NDW8</accession>
<keyword id="KW-0067">ATP-binding</keyword>
<keyword id="KW-0963">Cytoplasm</keyword>
<keyword id="KW-0418">Kinase</keyword>
<keyword id="KW-0460">Magnesium</keyword>
<keyword id="KW-0479">Metal-binding</keyword>
<keyword id="KW-0546">Nucleotide metabolism</keyword>
<keyword id="KW-0547">Nucleotide-binding</keyword>
<keyword id="KW-0597">Phosphoprotein</keyword>
<keyword id="KW-0808">Transferase</keyword>
<comment type="function">
    <text evidence="1">Major role in the synthesis of nucleoside triphosphates other than ATP. The ATP gamma phosphate is transferred to the NDP beta phosphate via a ping-pong mechanism, using a phosphorylated active-site intermediate.</text>
</comment>
<comment type="catalytic activity">
    <reaction evidence="1">
        <text>a 2'-deoxyribonucleoside 5'-diphosphate + ATP = a 2'-deoxyribonucleoside 5'-triphosphate + ADP</text>
        <dbReference type="Rhea" id="RHEA:44640"/>
        <dbReference type="ChEBI" id="CHEBI:30616"/>
        <dbReference type="ChEBI" id="CHEBI:61560"/>
        <dbReference type="ChEBI" id="CHEBI:73316"/>
        <dbReference type="ChEBI" id="CHEBI:456216"/>
        <dbReference type="EC" id="2.7.4.6"/>
    </reaction>
</comment>
<comment type="catalytic activity">
    <reaction evidence="1">
        <text>a ribonucleoside 5'-diphosphate + ATP = a ribonucleoside 5'-triphosphate + ADP</text>
        <dbReference type="Rhea" id="RHEA:18113"/>
        <dbReference type="ChEBI" id="CHEBI:30616"/>
        <dbReference type="ChEBI" id="CHEBI:57930"/>
        <dbReference type="ChEBI" id="CHEBI:61557"/>
        <dbReference type="ChEBI" id="CHEBI:456216"/>
        <dbReference type="EC" id="2.7.4.6"/>
    </reaction>
</comment>
<comment type="cofactor">
    <cofactor evidence="1">
        <name>Mg(2+)</name>
        <dbReference type="ChEBI" id="CHEBI:18420"/>
    </cofactor>
</comment>
<comment type="subunit">
    <text evidence="1">Homotetramer.</text>
</comment>
<comment type="subcellular location">
    <subcellularLocation>
        <location evidence="1">Cytoplasm</location>
    </subcellularLocation>
</comment>
<comment type="similarity">
    <text evidence="1">Belongs to the NDK family.</text>
</comment>
<protein>
    <recommendedName>
        <fullName evidence="1">Nucleoside diphosphate kinase</fullName>
        <shortName evidence="1">NDK</shortName>
        <shortName evidence="1">NDP kinase</shortName>
        <ecNumber evidence="1">2.7.4.6</ecNumber>
    </recommendedName>
    <alternativeName>
        <fullName evidence="1">Nucleoside-2-P kinase</fullName>
    </alternativeName>
</protein>
<name>NDK_COXBR</name>
<sequence length="144" mass="15854">MAIERTLSIIKPDAVAKNVIGQIYSRFEKAGLKIIAAKMCHLSKPQAEKFYAVHKDRPFYPDLVKFMTQGPVMIQVLEGENAIVKNREIMGATNPKEALPGTIRADFADSIDANAVHGSDGPETAKEEIAFFFKPDESFNSIGV</sequence>
<dbReference type="EC" id="2.7.4.6" evidence="1"/>
<dbReference type="EMBL" id="CP000890">
    <property type="protein sequence ID" value="ABX78529.1"/>
    <property type="molecule type" value="Genomic_DNA"/>
</dbReference>
<dbReference type="RefSeq" id="WP_010958107.1">
    <property type="nucleotide sequence ID" value="NC_010117.1"/>
</dbReference>
<dbReference type="SMR" id="A9NDW8"/>
<dbReference type="KEGG" id="cbs:COXBURSA331_A1402"/>
<dbReference type="HOGENOM" id="CLU_060216_8_1_6"/>
<dbReference type="GO" id="GO:0005737">
    <property type="term" value="C:cytoplasm"/>
    <property type="evidence" value="ECO:0007669"/>
    <property type="project" value="UniProtKB-SubCell"/>
</dbReference>
<dbReference type="GO" id="GO:0005524">
    <property type="term" value="F:ATP binding"/>
    <property type="evidence" value="ECO:0007669"/>
    <property type="project" value="UniProtKB-UniRule"/>
</dbReference>
<dbReference type="GO" id="GO:0046872">
    <property type="term" value="F:metal ion binding"/>
    <property type="evidence" value="ECO:0007669"/>
    <property type="project" value="UniProtKB-KW"/>
</dbReference>
<dbReference type="GO" id="GO:0004550">
    <property type="term" value="F:nucleoside diphosphate kinase activity"/>
    <property type="evidence" value="ECO:0007669"/>
    <property type="project" value="UniProtKB-UniRule"/>
</dbReference>
<dbReference type="GO" id="GO:0006241">
    <property type="term" value="P:CTP biosynthetic process"/>
    <property type="evidence" value="ECO:0007669"/>
    <property type="project" value="UniProtKB-UniRule"/>
</dbReference>
<dbReference type="GO" id="GO:0006183">
    <property type="term" value="P:GTP biosynthetic process"/>
    <property type="evidence" value="ECO:0007669"/>
    <property type="project" value="UniProtKB-UniRule"/>
</dbReference>
<dbReference type="GO" id="GO:0006228">
    <property type="term" value="P:UTP biosynthetic process"/>
    <property type="evidence" value="ECO:0007669"/>
    <property type="project" value="UniProtKB-UniRule"/>
</dbReference>
<dbReference type="CDD" id="cd04413">
    <property type="entry name" value="NDPk_I"/>
    <property type="match status" value="1"/>
</dbReference>
<dbReference type="FunFam" id="3.30.70.141:FF:000001">
    <property type="entry name" value="Nucleoside diphosphate kinase"/>
    <property type="match status" value="1"/>
</dbReference>
<dbReference type="Gene3D" id="3.30.70.141">
    <property type="entry name" value="Nucleoside diphosphate kinase-like domain"/>
    <property type="match status" value="1"/>
</dbReference>
<dbReference type="HAMAP" id="MF_00451">
    <property type="entry name" value="NDP_kinase"/>
    <property type="match status" value="1"/>
</dbReference>
<dbReference type="InterPro" id="IPR034907">
    <property type="entry name" value="NDK-like_dom"/>
</dbReference>
<dbReference type="InterPro" id="IPR036850">
    <property type="entry name" value="NDK-like_dom_sf"/>
</dbReference>
<dbReference type="InterPro" id="IPR001564">
    <property type="entry name" value="Nucleoside_diP_kinase"/>
</dbReference>
<dbReference type="InterPro" id="IPR023005">
    <property type="entry name" value="Nucleoside_diP_kinase_AS"/>
</dbReference>
<dbReference type="NCBIfam" id="NF001908">
    <property type="entry name" value="PRK00668.1"/>
    <property type="match status" value="1"/>
</dbReference>
<dbReference type="PANTHER" id="PTHR11349">
    <property type="entry name" value="NUCLEOSIDE DIPHOSPHATE KINASE"/>
    <property type="match status" value="1"/>
</dbReference>
<dbReference type="Pfam" id="PF00334">
    <property type="entry name" value="NDK"/>
    <property type="match status" value="1"/>
</dbReference>
<dbReference type="PRINTS" id="PR01243">
    <property type="entry name" value="NUCDPKINASE"/>
</dbReference>
<dbReference type="SMART" id="SM00562">
    <property type="entry name" value="NDK"/>
    <property type="match status" value="1"/>
</dbReference>
<dbReference type="SUPFAM" id="SSF54919">
    <property type="entry name" value="Nucleoside diphosphate kinase, NDK"/>
    <property type="match status" value="1"/>
</dbReference>
<dbReference type="PROSITE" id="PS00469">
    <property type="entry name" value="NDPK"/>
    <property type="match status" value="1"/>
</dbReference>
<dbReference type="PROSITE" id="PS51374">
    <property type="entry name" value="NDPK_LIKE"/>
    <property type="match status" value="1"/>
</dbReference>
<proteinExistence type="inferred from homology"/>
<gene>
    <name evidence="1" type="primary">ndk</name>
    <name type="ordered locus">COXBURSA331_A1402</name>
</gene>
<organism>
    <name type="scientific">Coxiella burnetii (strain RSA 331 / Henzerling II)</name>
    <dbReference type="NCBI Taxonomy" id="360115"/>
    <lineage>
        <taxon>Bacteria</taxon>
        <taxon>Pseudomonadati</taxon>
        <taxon>Pseudomonadota</taxon>
        <taxon>Gammaproteobacteria</taxon>
        <taxon>Legionellales</taxon>
        <taxon>Coxiellaceae</taxon>
        <taxon>Coxiella</taxon>
    </lineage>
</organism>
<evidence type="ECO:0000255" key="1">
    <source>
        <dbReference type="HAMAP-Rule" id="MF_00451"/>
    </source>
</evidence>
<reference key="1">
    <citation type="submission" date="2007-11" db="EMBL/GenBank/DDBJ databases">
        <title>Genome sequencing of phylogenetically and phenotypically diverse Coxiella burnetii isolates.</title>
        <authorList>
            <person name="Seshadri R."/>
            <person name="Samuel J.E."/>
        </authorList>
    </citation>
    <scope>NUCLEOTIDE SEQUENCE [LARGE SCALE GENOMIC DNA]</scope>
    <source>
        <strain>RSA 331 / Henzerling II</strain>
    </source>
</reference>